<proteinExistence type="evidence at protein level"/>
<feature type="chain" id="PRO_0000192592" description="Bacterioferritin">
    <location>
        <begin position="1"/>
        <end position="158"/>
    </location>
</feature>
<feature type="domain" description="Ferritin-like diiron" evidence="2">
    <location>
        <begin position="1"/>
        <end position="145"/>
    </location>
</feature>
<feature type="binding site" evidence="2 5">
    <location>
        <position position="18"/>
    </location>
    <ligand>
        <name>Fe cation</name>
        <dbReference type="ChEBI" id="CHEBI:24875"/>
        <label>1</label>
    </ligand>
</feature>
<feature type="binding site" evidence="2 5">
    <location>
        <position position="46"/>
    </location>
    <ligand>
        <name>Fe cation</name>
        <dbReference type="ChEBI" id="CHEBI:24875"/>
        <label>3</label>
    </ligand>
</feature>
<feature type="binding site" evidence="2 5">
    <location>
        <position position="50"/>
    </location>
    <ligand>
        <name>Fe cation</name>
        <dbReference type="ChEBI" id="CHEBI:24875"/>
        <label>3</label>
    </ligand>
</feature>
<feature type="binding site" evidence="2 5">
    <location>
        <position position="51"/>
    </location>
    <ligand>
        <name>Fe cation</name>
        <dbReference type="ChEBI" id="CHEBI:24875"/>
        <label>1</label>
    </ligand>
</feature>
<feature type="binding site" evidence="2 5">
    <location>
        <position position="51"/>
    </location>
    <ligand>
        <name>Fe cation</name>
        <dbReference type="ChEBI" id="CHEBI:24875"/>
        <label>2</label>
    </ligand>
</feature>
<feature type="binding site" description="axial binding residue" evidence="2 5">
    <location>
        <position position="52"/>
    </location>
    <ligand>
        <name>heme b</name>
        <dbReference type="ChEBI" id="CHEBI:60344"/>
        <note>ligand shared between dimeric partners</note>
    </ligand>
    <ligandPart>
        <name>Fe</name>
        <dbReference type="ChEBI" id="CHEBI:18248"/>
    </ligandPart>
</feature>
<feature type="binding site" evidence="2 5">
    <location>
        <position position="54"/>
    </location>
    <ligand>
        <name>Fe cation</name>
        <dbReference type="ChEBI" id="CHEBI:24875"/>
        <label>1</label>
    </ligand>
</feature>
<feature type="binding site" evidence="2 5">
    <location>
        <position position="94"/>
    </location>
    <ligand>
        <name>Fe cation</name>
        <dbReference type="ChEBI" id="CHEBI:24875"/>
        <label>2</label>
    </ligand>
</feature>
<feature type="binding site" evidence="2 5">
    <location>
        <position position="127"/>
    </location>
    <ligand>
        <name>Fe cation</name>
        <dbReference type="ChEBI" id="CHEBI:24875"/>
        <label>1</label>
    </ligand>
</feature>
<feature type="binding site" evidence="2 5">
    <location>
        <position position="127"/>
    </location>
    <ligand>
        <name>Fe cation</name>
        <dbReference type="ChEBI" id="CHEBI:24875"/>
        <label>2</label>
    </ligand>
</feature>
<feature type="binding site" evidence="2 5">
    <location>
        <position position="130"/>
    </location>
    <ligand>
        <name>Fe cation</name>
        <dbReference type="ChEBI" id="CHEBI:24875"/>
        <label>2</label>
    </ligand>
</feature>
<feature type="sequence variant" description="In strain: ECOR 30.">
    <original>TKV</original>
    <variation>VKI</variation>
    <location>
        <begin position="5"/>
        <end position="7"/>
    </location>
</feature>
<feature type="sequence variant" description="In strain: ECOR 30.">
    <original>K</original>
    <variation>M</variation>
    <location>
        <position position="38"/>
    </location>
</feature>
<feature type="sequence variant" description="In strain: ECOR 30.">
    <original>R</original>
    <variation>K</variation>
    <location>
        <position position="57"/>
    </location>
</feature>
<feature type="sequence variant" description="In strain: ECOR 30.">
    <original>L</original>
    <variation>I</variation>
    <location>
        <position position="68"/>
    </location>
</feature>
<feature type="sequence variant" description="In strain: ECOR 30.">
    <original>N</original>
    <variation>G</variation>
    <location>
        <position position="78"/>
    </location>
</feature>
<feature type="sequence variant" description="In strain: ECOR 30.">
    <original>R</original>
    <variation>Q</variation>
    <location>
        <position position="88"/>
    </location>
</feature>
<feature type="sequence variant" description="In strain: ECOR 30.">
    <original>A</original>
    <variation>R</variation>
    <location>
        <position position="92"/>
    </location>
</feature>
<feature type="sequence variant" description="In strain: ECOR 30.">
    <original>D</original>
    <variation>E</variation>
    <location>
        <position position="96"/>
    </location>
</feature>
<feature type="sequence variant" description="In strain: ECOR 30.">
    <original>N</original>
    <variation>D</variation>
    <location>
        <position position="100"/>
    </location>
</feature>
<feature type="sequence variant" description="In strain: ECOR 30.">
    <original>G</original>
    <variation>A</variation>
    <location>
        <position position="106"/>
    </location>
</feature>
<feature type="sequence variant" description="In strain: ECOR 30.">
    <original>R</original>
    <variation>A</variation>
    <location>
        <position position="125"/>
    </location>
</feature>
<feature type="sequence variant" description="In strain: ECOR 30.">
    <original>QKM</original>
    <variation>GKI</variation>
    <location>
        <begin position="142"/>
        <end position="144"/>
    </location>
</feature>
<feature type="sequence variant" description="In strain: ECOR 30.">
    <original>AQIREEG</original>
    <variation>SQIKVKD</variation>
    <location>
        <begin position="152"/>
        <end position="158"/>
    </location>
</feature>
<feature type="mutagenesis site" description="Highly decreased Fe(2+) oxidation activity. Is also severely restricted in its ability to lay down an iron core." evidence="4">
    <original>E</original>
    <variation>A</variation>
    <location>
        <position position="18"/>
    </location>
</feature>
<feature type="mutagenesis site" description="No loss of heme binding." evidence="11">
    <original>M</original>
    <variation>H</variation>
    <variation>L</variation>
    <location>
        <position position="31"/>
    </location>
</feature>
<feature type="mutagenesis site" description="Fe(2+)-binding and single turnover oxidation at the ferroxidase center occur normally but iron mineralization within the cavity is significantly impaired." evidence="7">
    <original>H</original>
    <variation>A</variation>
    <location>
        <position position="46"/>
    </location>
</feature>
<feature type="mutagenesis site" description="Fe(2+)-binding and single turnover oxidation at the ferroxidase center occur normally but iron mineralization within the cavity is significantly impaired." evidence="7">
    <original>D</original>
    <variation>A</variation>
    <location>
        <position position="50"/>
    </location>
</feature>
<feature type="mutagenesis site" description="Loss of heme binding. Is still capable of accumulating iron." evidence="11">
    <original>M</original>
    <variation>H</variation>
    <variation>L</variation>
    <location>
        <position position="52"/>
    </location>
</feature>
<feature type="mutagenesis site" description="No loss of heme binding." evidence="11">
    <original>M</original>
    <variation>L</variation>
    <location>
        <position position="86"/>
    </location>
</feature>
<feature type="mutagenesis site" description="Decreased Fe(2+) oxidation activity. Is also affected in its ability to lay down an iron core." evidence="4">
    <original>E</original>
    <variation>Q</variation>
    <location>
        <position position="127"/>
    </location>
</feature>
<feature type="mutagenesis site" description="Decreased Fe(2+) oxidation activity. Is also severely restricted in its ability to lay down an iron core." evidence="4">
    <original>H</original>
    <variation>E</variation>
    <location>
        <position position="130"/>
    </location>
</feature>
<feature type="sequence conflict" description="In Ref. 5; AA sequence." evidence="14" ref="5">
    <original>K</original>
    <variation>M</variation>
    <location>
        <position position="53"/>
    </location>
</feature>
<feature type="helix" evidence="15">
    <location>
        <begin position="5"/>
        <end position="34"/>
    </location>
</feature>
<feature type="helix" evidence="15">
    <location>
        <begin position="38"/>
        <end position="64"/>
    </location>
</feature>
<feature type="helix" evidence="15">
    <location>
        <begin position="83"/>
        <end position="110"/>
    </location>
</feature>
<feature type="helix" evidence="15">
    <location>
        <begin position="114"/>
        <end position="144"/>
    </location>
</feature>
<feature type="helix" evidence="15">
    <location>
        <begin position="146"/>
        <end position="152"/>
    </location>
</feature>
<keyword id="KW-0002">3D-structure</keyword>
<keyword id="KW-0903">Direct protein sequencing</keyword>
<keyword id="KW-0349">Heme</keyword>
<keyword id="KW-0408">Iron</keyword>
<keyword id="KW-0409">Iron storage</keyword>
<keyword id="KW-0479">Metal-binding</keyword>
<keyword id="KW-0560">Oxidoreductase</keyword>
<keyword id="KW-1185">Reference proteome</keyword>
<sequence>MKGDTKVINYLNKLLGNELVAINQYFLHARMFKNWGLKRLNDVEYHESIDEMKHADRYIERILFLEGLPNLQDLGKLNIGEDVEEMLRSDLALELDGAKNLREAIGYADSVHDYVSRDMMIEILRDEEGHIDWLETELDLIQKMGLQNYLQAQIREEG</sequence>
<dbReference type="EC" id="1.16.3.1"/>
<dbReference type="EMBL" id="M27176">
    <property type="protein sequence ID" value="AAC13987.1"/>
    <property type="molecule type" value="mRNA"/>
</dbReference>
<dbReference type="EMBL" id="AF058450">
    <property type="protein sequence ID" value="AAC14288.1"/>
    <property type="molecule type" value="Genomic_DNA"/>
</dbReference>
<dbReference type="EMBL" id="U18997">
    <property type="protein sequence ID" value="AAA58133.1"/>
    <property type="molecule type" value="Genomic_DNA"/>
</dbReference>
<dbReference type="EMBL" id="U00096">
    <property type="protein sequence ID" value="AAC76361.1"/>
    <property type="molecule type" value="Genomic_DNA"/>
</dbReference>
<dbReference type="EMBL" id="AP009048">
    <property type="protein sequence ID" value="BAE77955.1"/>
    <property type="molecule type" value="Genomic_DNA"/>
</dbReference>
<dbReference type="EMBL" id="L28106">
    <property type="protein sequence ID" value="AAC36929.1"/>
    <property type="molecule type" value="Genomic_DNA"/>
</dbReference>
<dbReference type="PIR" id="JV0032">
    <property type="entry name" value="FREC"/>
</dbReference>
<dbReference type="RefSeq" id="NP_417795.1">
    <property type="nucleotide sequence ID" value="NC_000913.3"/>
</dbReference>
<dbReference type="RefSeq" id="WP_000675504.1">
    <property type="nucleotide sequence ID" value="NZ_STEB01000038.1"/>
</dbReference>
<dbReference type="PDB" id="1BCF">
    <property type="method" value="X-ray"/>
    <property type="resolution" value="2.90 A"/>
    <property type="chains" value="A/B/C/D/E/F/G/H/I/J/K/L=1-158"/>
</dbReference>
<dbReference type="PDB" id="1BFR">
    <property type="method" value="X-ray"/>
    <property type="resolution" value="2.94 A"/>
    <property type="chains" value="A/B/C/D/E/F/G/H/I/J/K/L/M/N/O/P/Q/R/S/T/U/V/W/X=1-158"/>
</dbReference>
<dbReference type="PDB" id="2HTN">
    <property type="method" value="X-ray"/>
    <property type="resolution" value="2.50 A"/>
    <property type="chains" value="A/B/C/D/E/F/G/H=1-158"/>
</dbReference>
<dbReference type="PDB" id="2VXI">
    <property type="method" value="X-ray"/>
    <property type="resolution" value="1.91 A"/>
    <property type="chains" value="A/B/C/D/E/F/G/H/I/J/K/L=1-158"/>
</dbReference>
<dbReference type="PDB" id="2Y3Q">
    <property type="method" value="X-ray"/>
    <property type="resolution" value="1.55 A"/>
    <property type="chains" value="A/B/C/D/E/F/G/H/I/J/K/L=1-158"/>
</dbReference>
<dbReference type="PDB" id="3E1J">
    <property type="method" value="X-ray"/>
    <property type="resolution" value="2.70 A"/>
    <property type="chains" value="A/B/C/D/E/F/G/H/I/J/K/L=1-158"/>
</dbReference>
<dbReference type="PDB" id="3E1L">
    <property type="method" value="X-ray"/>
    <property type="resolution" value="2.50 A"/>
    <property type="chains" value="A/B/C/D/E/F/G/H/I/J/K/L=1-158"/>
</dbReference>
<dbReference type="PDB" id="3E1M">
    <property type="method" value="X-ray"/>
    <property type="resolution" value="2.70 A"/>
    <property type="chains" value="A/B/C/D/E/F/G/H/I/J/K/L=1-158"/>
</dbReference>
<dbReference type="PDB" id="3E1N">
    <property type="method" value="X-ray"/>
    <property type="resolution" value="2.80 A"/>
    <property type="chains" value="A/B/C/D/E/F/G/H/I/J/K/L=1-158"/>
</dbReference>
<dbReference type="PDB" id="3E1O">
    <property type="method" value="X-ray"/>
    <property type="resolution" value="2.95 A"/>
    <property type="chains" value="A/B/C/D/E/F/G/H/I/J/K/L=1-158"/>
</dbReference>
<dbReference type="PDB" id="3E1P">
    <property type="method" value="X-ray"/>
    <property type="resolution" value="2.40 A"/>
    <property type="chains" value="A/B/C/D/E/F/G/H/I/J/K/L=1-158"/>
</dbReference>
<dbReference type="PDB" id="3E1Q">
    <property type="method" value="X-ray"/>
    <property type="resolution" value="2.60 A"/>
    <property type="chains" value="A/B/C/D/E/F/G/H/I/J/K/L=1-158"/>
</dbReference>
<dbReference type="PDB" id="3E2C">
    <property type="method" value="X-ray"/>
    <property type="resolution" value="1.80 A"/>
    <property type="chains" value="A/B=1-158"/>
</dbReference>
<dbReference type="PDB" id="3GHQ">
    <property type="method" value="X-ray"/>
    <property type="resolution" value="2.70 A"/>
    <property type="chains" value="A/B/C/D/E/F/G/H/I/J/K/L=1-158"/>
</dbReference>
<dbReference type="PDB" id="4CVP">
    <property type="method" value="X-ray"/>
    <property type="resolution" value="2.11 A"/>
    <property type="chains" value="A=1-158"/>
</dbReference>
<dbReference type="PDB" id="4CVR">
    <property type="method" value="X-ray"/>
    <property type="resolution" value="1.10 A"/>
    <property type="chains" value="A=1-158"/>
</dbReference>
<dbReference type="PDB" id="4CVS">
    <property type="method" value="X-ray"/>
    <property type="resolution" value="1.39 A"/>
    <property type="chains" value="A=1-158"/>
</dbReference>
<dbReference type="PDB" id="4CVT">
    <property type="method" value="X-ray"/>
    <property type="resolution" value="1.79 A"/>
    <property type="chains" value="A=1-158"/>
</dbReference>
<dbReference type="PDB" id="4U3G">
    <property type="method" value="X-ray"/>
    <property type="resolution" value="2.00 A"/>
    <property type="chains" value="A/B/C/D/E/F/G/H/I/J/K/L=1-158"/>
</dbReference>
<dbReference type="PDB" id="4XKS">
    <property type="method" value="X-ray"/>
    <property type="resolution" value="1.57 A"/>
    <property type="chains" value="A/B/C/D/E/F/G/H/I/J/K/L=1-158"/>
</dbReference>
<dbReference type="PDB" id="4XKT">
    <property type="method" value="X-ray"/>
    <property type="resolution" value="1.82 A"/>
    <property type="chains" value="A/B/C/D/E/F/G/H/I/J/K/L=1-158"/>
</dbReference>
<dbReference type="PDB" id="4XKU">
    <property type="method" value="X-ray"/>
    <property type="resolution" value="1.78 A"/>
    <property type="chains" value="A/B/C/D/E/F/G/H/I/J/K/L=1-158"/>
</dbReference>
<dbReference type="PDB" id="5XGO">
    <property type="method" value="X-ray"/>
    <property type="resolution" value="1.99 A"/>
    <property type="chains" value="A/B/C/D/E/F/G/H/I/J/K/L=138-158"/>
</dbReference>
<dbReference type="PDB" id="6P8K">
    <property type="method" value="X-ray"/>
    <property type="resolution" value="1.70 A"/>
    <property type="chains" value="A/B/C/D/E/F/G/H/I/J/K/L=1-158"/>
</dbReference>
<dbReference type="PDB" id="6P8L">
    <property type="method" value="X-ray"/>
    <property type="resolution" value="2.10 A"/>
    <property type="chains" value="A/B/C/D/E/F/G/H/I/J/K/L=1-158"/>
</dbReference>
<dbReference type="PDBsum" id="1BCF"/>
<dbReference type="PDBsum" id="1BFR"/>
<dbReference type="PDBsum" id="2HTN"/>
<dbReference type="PDBsum" id="2VXI"/>
<dbReference type="PDBsum" id="2Y3Q"/>
<dbReference type="PDBsum" id="3E1J"/>
<dbReference type="PDBsum" id="3E1L"/>
<dbReference type="PDBsum" id="3E1M"/>
<dbReference type="PDBsum" id="3E1N"/>
<dbReference type="PDBsum" id="3E1O"/>
<dbReference type="PDBsum" id="3E1P"/>
<dbReference type="PDBsum" id="3E1Q"/>
<dbReference type="PDBsum" id="3E2C"/>
<dbReference type="PDBsum" id="3GHQ"/>
<dbReference type="PDBsum" id="4CVP"/>
<dbReference type="PDBsum" id="4CVR"/>
<dbReference type="PDBsum" id="4CVS"/>
<dbReference type="PDBsum" id="4CVT"/>
<dbReference type="PDBsum" id="4U3G"/>
<dbReference type="PDBsum" id="4XKS"/>
<dbReference type="PDBsum" id="4XKT"/>
<dbReference type="PDBsum" id="4XKU"/>
<dbReference type="PDBsum" id="5XGO"/>
<dbReference type="PDBsum" id="6P8K"/>
<dbReference type="PDBsum" id="6P8L"/>
<dbReference type="SMR" id="P0ABD3"/>
<dbReference type="BioGRID" id="4262466">
    <property type="interactions" value="25"/>
</dbReference>
<dbReference type="DIP" id="DIP-36167N"/>
<dbReference type="FunCoup" id="P0ABD3">
    <property type="interactions" value="338"/>
</dbReference>
<dbReference type="IntAct" id="P0ABD3">
    <property type="interactions" value="3"/>
</dbReference>
<dbReference type="STRING" id="511145.b3336"/>
<dbReference type="jPOST" id="P0ABD3"/>
<dbReference type="PaxDb" id="511145-b3336"/>
<dbReference type="EnsemblBacteria" id="AAC76361">
    <property type="protein sequence ID" value="AAC76361"/>
    <property type="gene ID" value="b3336"/>
</dbReference>
<dbReference type="GeneID" id="86862266"/>
<dbReference type="GeneID" id="947839"/>
<dbReference type="KEGG" id="ecj:JW3298"/>
<dbReference type="KEGG" id="eco:b3336"/>
<dbReference type="KEGG" id="ecoc:C3026_18120"/>
<dbReference type="PATRIC" id="fig|1411691.4.peg.3395"/>
<dbReference type="EchoBASE" id="EB0111"/>
<dbReference type="eggNOG" id="COG2193">
    <property type="taxonomic scope" value="Bacteria"/>
</dbReference>
<dbReference type="HOGENOM" id="CLU_104506_2_0_6"/>
<dbReference type="InParanoid" id="P0ABD3"/>
<dbReference type="OMA" id="YQRLFHV"/>
<dbReference type="OrthoDB" id="9800505at2"/>
<dbReference type="PhylomeDB" id="P0ABD3"/>
<dbReference type="BioCyc" id="EcoCyc:EG10113-MONOMER"/>
<dbReference type="BioCyc" id="MetaCyc:EG10113-MONOMER"/>
<dbReference type="BRENDA" id="1.16.3.1">
    <property type="organism ID" value="2026"/>
</dbReference>
<dbReference type="EvolutionaryTrace" id="P0ABD3"/>
<dbReference type="PRO" id="PR:P0ABD3"/>
<dbReference type="Proteomes" id="UP000000625">
    <property type="component" value="Chromosome"/>
</dbReference>
<dbReference type="GO" id="GO:0005829">
    <property type="term" value="C:cytosol"/>
    <property type="evidence" value="ECO:0000314"/>
    <property type="project" value="EcoCyc"/>
</dbReference>
<dbReference type="GO" id="GO:0016020">
    <property type="term" value="C:membrane"/>
    <property type="evidence" value="ECO:0007005"/>
    <property type="project" value="UniProtKB"/>
</dbReference>
<dbReference type="GO" id="GO:0008199">
    <property type="term" value="F:ferric iron binding"/>
    <property type="evidence" value="ECO:0007669"/>
    <property type="project" value="InterPro"/>
</dbReference>
<dbReference type="GO" id="GO:0004322">
    <property type="term" value="F:ferroxidase activity"/>
    <property type="evidence" value="ECO:0000314"/>
    <property type="project" value="CACAO"/>
</dbReference>
<dbReference type="GO" id="GO:0020037">
    <property type="term" value="F:heme binding"/>
    <property type="evidence" value="ECO:0000314"/>
    <property type="project" value="EcoCyc"/>
</dbReference>
<dbReference type="GO" id="GO:0042802">
    <property type="term" value="F:identical protein binding"/>
    <property type="evidence" value="ECO:0000314"/>
    <property type="project" value="EcoCyc"/>
</dbReference>
<dbReference type="GO" id="GO:0005506">
    <property type="term" value="F:iron ion binding"/>
    <property type="evidence" value="ECO:0000314"/>
    <property type="project" value="EcoCyc"/>
</dbReference>
<dbReference type="GO" id="GO:0140315">
    <property type="term" value="F:iron ion sequestering activity"/>
    <property type="evidence" value="ECO:0000314"/>
    <property type="project" value="EcoCyc"/>
</dbReference>
<dbReference type="GO" id="GO:0016491">
    <property type="term" value="F:oxidoreductase activity"/>
    <property type="evidence" value="ECO:0000303"/>
    <property type="project" value="EcoliWiki"/>
</dbReference>
<dbReference type="GO" id="GO:0042803">
    <property type="term" value="F:protein homodimerization activity"/>
    <property type="evidence" value="ECO:0000314"/>
    <property type="project" value="EcoCyc"/>
</dbReference>
<dbReference type="GO" id="GO:0006879">
    <property type="term" value="P:intracellular iron ion homeostasis"/>
    <property type="evidence" value="ECO:0007669"/>
    <property type="project" value="UniProtKB-KW"/>
</dbReference>
<dbReference type="GO" id="GO:0006826">
    <property type="term" value="P:iron ion transport"/>
    <property type="evidence" value="ECO:0007669"/>
    <property type="project" value="InterPro"/>
</dbReference>
<dbReference type="CDD" id="cd00907">
    <property type="entry name" value="Bacterioferritin"/>
    <property type="match status" value="1"/>
</dbReference>
<dbReference type="FunFam" id="1.20.1260.10:FF:000005">
    <property type="entry name" value="Bacterioferritin"/>
    <property type="match status" value="1"/>
</dbReference>
<dbReference type="Gene3D" id="1.20.1260.10">
    <property type="match status" value="1"/>
</dbReference>
<dbReference type="InterPro" id="IPR002024">
    <property type="entry name" value="Bacterioferritin"/>
</dbReference>
<dbReference type="InterPro" id="IPR012347">
    <property type="entry name" value="Ferritin-like"/>
</dbReference>
<dbReference type="InterPro" id="IPR009040">
    <property type="entry name" value="Ferritin-like_diiron"/>
</dbReference>
<dbReference type="InterPro" id="IPR009078">
    <property type="entry name" value="Ferritin-like_SF"/>
</dbReference>
<dbReference type="InterPro" id="IPR008331">
    <property type="entry name" value="Ferritin_DPS_dom"/>
</dbReference>
<dbReference type="NCBIfam" id="TIGR00754">
    <property type="entry name" value="bfr"/>
    <property type="match status" value="1"/>
</dbReference>
<dbReference type="PANTHER" id="PTHR30295">
    <property type="entry name" value="BACTERIOFERRITIN"/>
    <property type="match status" value="1"/>
</dbReference>
<dbReference type="PANTHER" id="PTHR30295:SF0">
    <property type="entry name" value="BACTERIOFERRITIN"/>
    <property type="match status" value="1"/>
</dbReference>
<dbReference type="Pfam" id="PF00210">
    <property type="entry name" value="Ferritin"/>
    <property type="match status" value="1"/>
</dbReference>
<dbReference type="PIRSF" id="PIRSF002560">
    <property type="entry name" value="Bacterioferritin"/>
    <property type="match status" value="1"/>
</dbReference>
<dbReference type="PRINTS" id="PR00601">
    <property type="entry name" value="BACFERRITIN"/>
</dbReference>
<dbReference type="SUPFAM" id="SSF47240">
    <property type="entry name" value="Ferritin-like"/>
    <property type="match status" value="1"/>
</dbReference>
<dbReference type="PROSITE" id="PS00549">
    <property type="entry name" value="BACTERIOFERRITIN"/>
    <property type="match status" value="1"/>
</dbReference>
<dbReference type="PROSITE" id="PS50905">
    <property type="entry name" value="FERRITIN_LIKE"/>
    <property type="match status" value="1"/>
</dbReference>
<accession>P0ABD3</accession>
<accession>O68931</accession>
<accession>P11056</accession>
<accession>Q2M701</accession>
<name>BFR_ECOLI</name>
<reference key="1">
    <citation type="journal article" date="1989" name="J. Bacteriol.">
        <title>Cloning, sequencing, and mapping of the bacterioferritin gene (bfr) of Escherichia coli K-12.</title>
        <authorList>
            <person name="Andrews S.C."/>
            <person name="Harrison P.M."/>
            <person name="Guest J.R."/>
        </authorList>
    </citation>
    <scope>NUCLEOTIDE SEQUENCE [GENOMIC DNA]</scope>
    <source>
        <strain>K12 / W3110 / ATCC 27325 / DSM 5911</strain>
    </source>
</reference>
<reference key="2">
    <citation type="submission" date="1998-04" db="EMBL/GenBank/DDBJ databases">
        <authorList>
            <person name="Noorani S.M."/>
            <person name="Lindahl L."/>
            <person name="Zengel J.M."/>
        </authorList>
    </citation>
    <scope>NUCLEOTIDE SEQUENCE [GENOMIC DNA]</scope>
    <source>
        <strain>ECOR 30</strain>
    </source>
</reference>
<reference key="3">
    <citation type="journal article" date="1997" name="Science">
        <title>The complete genome sequence of Escherichia coli K-12.</title>
        <authorList>
            <person name="Blattner F.R."/>
            <person name="Plunkett G. III"/>
            <person name="Bloch C.A."/>
            <person name="Perna N.T."/>
            <person name="Burland V."/>
            <person name="Riley M."/>
            <person name="Collado-Vides J."/>
            <person name="Glasner J.D."/>
            <person name="Rode C.K."/>
            <person name="Mayhew G.F."/>
            <person name="Gregor J."/>
            <person name="Davis N.W."/>
            <person name="Kirkpatrick H.A."/>
            <person name="Goeden M.A."/>
            <person name="Rose D.J."/>
            <person name="Mau B."/>
            <person name="Shao Y."/>
        </authorList>
    </citation>
    <scope>NUCLEOTIDE SEQUENCE [LARGE SCALE GENOMIC DNA]</scope>
    <source>
        <strain>K12 / MG1655 / ATCC 47076</strain>
    </source>
</reference>
<reference key="4">
    <citation type="journal article" date="2006" name="Mol. Syst. Biol.">
        <title>Highly accurate genome sequences of Escherichia coli K-12 strains MG1655 and W3110.</title>
        <authorList>
            <person name="Hayashi K."/>
            <person name="Morooka N."/>
            <person name="Yamamoto Y."/>
            <person name="Fujita K."/>
            <person name="Isono K."/>
            <person name="Choi S."/>
            <person name="Ohtsubo E."/>
            <person name="Baba T."/>
            <person name="Wanner B.L."/>
            <person name="Mori H."/>
            <person name="Horiuchi T."/>
        </authorList>
    </citation>
    <scope>NUCLEOTIDE SEQUENCE [LARGE SCALE GENOMIC DNA]</scope>
    <source>
        <strain>K12 / W3110 / ATCC 27325 / DSM 5911</strain>
    </source>
</reference>
<reference key="5">
    <citation type="journal article" date="1989" name="Biochem. Biophys. Res. Commun.">
        <title>Amino acid sequence of the bacterioferritin (cytochrome b1) of Escherichia coli-K12.</title>
        <authorList>
            <person name="Andrews S.C."/>
            <person name="Smith J.M.A."/>
            <person name="Guest J.R."/>
            <person name="Harrison P.M."/>
        </authorList>
    </citation>
    <scope>PROTEIN SEQUENCE OF 1-87</scope>
    <source>
        <strain>K12</strain>
    </source>
</reference>
<reference key="6">
    <citation type="journal article" date="1994" name="Gene">
        <title>Escherichia coli contains a set of genes homologous to those involved in protein secretion, DNA uptake and the assembly of type-4 fimbriae in other bacteria.</title>
        <authorList>
            <person name="Whitchurch C.B."/>
            <person name="Mattick J.S."/>
        </authorList>
    </citation>
    <scope>NUCLEOTIDE SEQUENCE [GENOMIC DNA] OF 128-158</scope>
    <source>
        <strain>K12</strain>
    </source>
</reference>
<reference key="7">
    <citation type="journal article" date="1995" name="J. Biol. Chem.">
        <title>Site-directed replacement of the coaxial heme ligands of bacterioferritin generates heme-free variants.</title>
        <authorList>
            <person name="Andrews S.C."/>
            <person name="Le Brun N.E."/>
            <person name="Barynin V."/>
            <person name="Thomson A.J."/>
            <person name="Moore G.R."/>
            <person name="Guest J.R."/>
            <person name="Harrison P.M."/>
        </authorList>
    </citation>
    <scope>HEME-BINDING</scope>
    <scope>MASS SPECTROMETRY</scope>
    <scope>MUTAGENESIS OF MET-31; MET-52 AND MET-86</scope>
    <source>
        <strain>K12 / JM101 / ATCC 33876 / DSM 3948 / NCIMB 11926</strain>
    </source>
</reference>
<reference key="8">
    <citation type="journal article" date="1997" name="Electrophoresis">
        <title>Escherichia coli proteome analysis using the gene-protein database.</title>
        <authorList>
            <person name="VanBogelen R.A."/>
            <person name="Abshire K.Z."/>
            <person name="Moldover B."/>
            <person name="Olson E.R."/>
            <person name="Neidhardt F.C."/>
        </authorList>
    </citation>
    <scope>IDENTIFICATION BY 2D-GEL</scope>
</reference>
<reference key="9">
    <citation type="journal article" date="2000" name="Biochemistry">
        <title>The iron oxidation and hydrolysis chemistry of Escherichia coli bacterioferritin.</title>
        <authorList>
            <person name="Yang X."/>
            <person name="Le Brun N.E."/>
            <person name="Thomson A.J."/>
            <person name="Moore G.R."/>
            <person name="Chasteen N.D."/>
        </authorList>
    </citation>
    <scope>FUNCTION</scope>
    <scope>CATALYTIC ACTIVITY</scope>
    <scope>ACTIVITY REGULATION</scope>
</reference>
<reference key="10">
    <citation type="journal article" date="2003" name="Biochemistry">
        <title>Core formation in Escherichia coli bacterioferritin requires a functional ferroxidase center.</title>
        <authorList>
            <person name="Baaghil S."/>
            <person name="Lewin A."/>
            <person name="Moore G.R."/>
            <person name="Le Brun N.E."/>
        </authorList>
    </citation>
    <scope>FUNCTION</scope>
    <scope>ROLE OF THE FERROXIDASE CENTER IN CORE FORMATION</scope>
    <scope>CATALYTIC ACTIVITY</scope>
    <scope>ACTIVITY REGULATION</scope>
    <scope>MUTAGENESIS OF GLU-18; GLU-127 AND HIS-130</scope>
</reference>
<reference key="11">
    <citation type="journal article" date="1994" name="Nat. Struct. Biol.">
        <title>Structure of a unique twofold symmetric haem-binding site.</title>
        <authorList>
            <person name="Frolow F."/>
            <person name="Kalb A.J."/>
            <person name="Yariv J."/>
        </authorList>
    </citation>
    <scope>X-RAY CRYSTALLOGRAPHY (2.9 ANGSTROMS) IN COMPLEX WITH HEME AND MANGANESE IONS</scope>
</reference>
<reference key="12">
    <citation type="journal article" date="1998" name="Acta Crystallogr. D">
        <title>Structure of a monoclinic crystal form of cytochrome b1 (bacterioferritin) from E. coli.</title>
        <authorList>
            <person name="Dautant A."/>
            <person name="Meyer J.-B."/>
            <person name="Yariv J."/>
            <person name="Precigoux G."/>
            <person name="Sweet R.M."/>
            <person name="Kalb A.J."/>
            <person name="Frolow F."/>
        </authorList>
    </citation>
    <scope>X-RAY CRYSTALLOGRAPHY (2.94 ANGSTROMS) IN COMPLEX WITH HEME AND MANGANESE IONS</scope>
    <scope>SUBUNIT</scope>
</reference>
<reference key="13">
    <citation type="journal article" date="2006" name="Acta Crystallogr. F">
        <title>Fortuitous structure determination of 'as-isolated' Escherichia coli bacterioferritin in a novel crystal form.</title>
        <authorList>
            <person name="van Eerde A."/>
            <person name="Wolterink-van Loo S."/>
            <person name="van der Oost J."/>
            <person name="Dijkstra B.W."/>
        </authorList>
    </citation>
    <scope>X-RAY CRYSTALLOGRAPHY (2.5 ANGSTROMS) IN COMPLEX WITH HEME; IRON AND ZINC IONS</scope>
    <source>
        <strain>B / BL21</strain>
    </source>
</reference>
<reference key="14">
    <citation type="journal article" date="2009" name="Biochemistry">
        <title>Monitoring the iron status of the ferroxidase center of Escherichia coli bacterioferritin using fluorescence spectroscopy.</title>
        <authorList>
            <person name="Lawson T.L."/>
            <person name="Crow A."/>
            <person name="Lewin A."/>
            <person name="Yasmin S."/>
            <person name="Moore G.R."/>
            <person name="Le Brun N.E."/>
        </authorList>
    </citation>
    <scope>X-RAY CRYSTALLOGRAPHY (2.6 ANGSTROMS) OF MUTANTS PHE-35 AND PHE-133 IN COMPLEX WITH HEME AND IRON IONS</scope>
    <scope>CATALYTIC ACTIVITY</scope>
    <scope>ACTIVITY REGULATION</scope>
    <source>
        <strain>K12 / JM109 / ATCC 53323</strain>
    </source>
</reference>
<reference key="15">
    <citation type="journal article" date="2009" name="J. Am. Chem. Soc.">
        <title>Structural basis for iron mineralization by bacterioferritin.</title>
        <authorList>
            <person name="Crow A."/>
            <person name="Lawson T.L."/>
            <person name="Lewin A."/>
            <person name="Moore G.R."/>
            <person name="Le Brun N.E."/>
        </authorList>
    </citation>
    <scope>X-RAY CRYSTALLOGRAPHY (2.4 ANGSTROMS) OF METAL-FREE APOPROTEIN AND IN COMPLEXES WITH ZN(2+); FE(2+); FE(3+) AND HEME</scope>
    <scope>COFACTOR</scope>
    <scope>INTERNAL SURFACE IRON-BINDING SITE</scope>
    <scope>MUTAGENESIS OF HIS-46 AND ASP-50</scope>
    <scope>MECHANISM OF IRON MINERALIZATION</scope>
    <source>
        <strain>K12 / JM109 / ATCC 53323</strain>
    </source>
</reference>
<reference key="16">
    <citation type="journal article" date="2009" name="J. Biol. Chem.">
        <title>Structural and mechanistic studies of a stabilized subunit dimer variant of Escherichia coli bacterioferritin identify residues required for core formation.</title>
        <authorList>
            <person name="Wong S.G."/>
            <person name="Tom-Yew S.A."/>
            <person name="Lewin A."/>
            <person name="Le Brun N.E."/>
            <person name="Moore G.R."/>
            <person name="Murphy M.E."/>
            <person name="Mauk A.G."/>
        </authorList>
    </citation>
    <scope>X-RAY CRYSTALLOGRAPHY (1.8 ANGSTROMS) OF MUTANT ARG-128/ARG-135 DIMER IN COMPLEX WITH HEME AND ZINC IONS</scope>
</reference>
<reference key="17">
    <citation type="journal article" date="2009" name="J. Biol. Inorg. Chem.">
        <title>The binding of haem and zinc in the 1.9 A X-ray structure of Escherichia coli bacterioferritin.</title>
        <authorList>
            <person name="Willies S.C."/>
            <person name="Isupov M.N."/>
            <person name="Garman E.F."/>
            <person name="Littlechild J.A."/>
        </authorList>
    </citation>
    <scope>X-RAY CRYSTALLOGRAPHY (1.91 ANGSTROMS) IN COMPLEX WITH HEME AND ZINC IONS</scope>
    <source>
        <strain>B / BL21</strain>
    </source>
</reference>
<reference key="18">
    <citation type="journal article" date="2011" name="Biochim. Biophys. Acta">
        <title>Monitoring and validating active site redox states in protein crystals.</title>
        <authorList>
            <person name="Antonyuk S.V."/>
            <person name="Hough M.A."/>
        </authorList>
    </citation>
    <scope>X-RAY CRYSTALLOGRAPHY (1.55 ANGSTROMS) IN COMPLEX WITH HEME</scope>
</reference>
<protein>
    <recommendedName>
        <fullName>Bacterioferritin</fullName>
        <shortName>BFR</shortName>
        <ecNumber>1.16.3.1</ecNumber>
    </recommendedName>
    <alternativeName>
        <fullName>Cytochrome b-1</fullName>
    </alternativeName>
    <alternativeName>
        <fullName>Cytochrome b-557</fullName>
    </alternativeName>
</protein>
<comment type="function">
    <text evidence="3 4">Iron-storage protein, whose ferroxidase center binds Fe(2+), oxidizes it using dioxygen to Fe(3+), and participates in the subsequent Fe(3+) oxide mineral core formation within the central cavity of the BFR protein shell. The mineralized iron core can contain as many as 2700 iron atoms/24-meric molecule.</text>
</comment>
<comment type="catalytic activity">
    <reaction evidence="3 4 9">
        <text>4 Fe(2+) + O2 + 4 H(+) = 4 Fe(3+) + 2 H2O</text>
        <dbReference type="Rhea" id="RHEA:11148"/>
        <dbReference type="ChEBI" id="CHEBI:15377"/>
        <dbReference type="ChEBI" id="CHEBI:15378"/>
        <dbReference type="ChEBI" id="CHEBI:15379"/>
        <dbReference type="ChEBI" id="CHEBI:29033"/>
        <dbReference type="ChEBI" id="CHEBI:29034"/>
        <dbReference type="EC" id="1.16.3.1"/>
    </reaction>
</comment>
<comment type="catalytic activity">
    <reaction evidence="1">
        <text>Fe(2+)(in) = Fe(2+)(out)</text>
        <dbReference type="Rhea" id="RHEA:28486"/>
        <dbReference type="ChEBI" id="CHEBI:29033"/>
    </reaction>
</comment>
<comment type="cofactor">
    <cofactor evidence="7">
        <name>heme b</name>
        <dbReference type="ChEBI" id="CHEBI:60344"/>
    </cofactor>
    <text evidence="7">Binds 1 heme b (iron(II)-protoporphyrin IX) group per dimer.</text>
</comment>
<comment type="cofactor">
    <cofactor evidence="7">
        <name>Fe cation</name>
        <dbReference type="ChEBI" id="CHEBI:24875"/>
    </cofactor>
    <text evidence="7">Binds 2 iron ions per subunit. The catalytic dinuclear iron-binding site within each subunit is known as the ferroxidase center. In BFR, the ferroxidase center appears to function as a true di-iron catalytic cofactor, rather than as a pore for the transfer of iron into the central cavity, as found for eukaryotic ferritins.</text>
</comment>
<comment type="activity regulation">
    <text evidence="3 4 9">Iron oxidation is inhibited by Zn(2+), which binds at the ferroxidase center with a higher affinity that Fe(2+). The occupation of the ferroxidase center by Zn(2+) also severely restricts the ability of BFR to form an iron core.</text>
</comment>
<comment type="subunit">
    <text evidence="5 6 8 9 10 12 13">Homooligomer of 24 subunits, arranged as 12 dimers, that are packed together to form an approximately spherical molecule with a central cavity, in which large amounts of iron can be deposited as a ferric-oxy-hydroxide mineral core.</text>
</comment>
<comment type="interaction">
    <interactant intactId="EBI-907496">
        <id>P0ABD3</id>
    </interactant>
    <interactant intactId="EBI-907496">
        <id>P0ABD3</id>
        <label>bfr</label>
    </interactant>
    <organismsDiffer>false</organismsDiffer>
    <experiments>2</experiments>
</comment>
<comment type="mass spectrometry"/>
<comment type="miscellaneous">
    <text>The internal surface iron site that binds iron 3 is important for the mineralization phase but not for Fe(2+) binding and oxidation at the ferroxidase center.</text>
</comment>
<comment type="similarity">
    <text evidence="14">Belongs to the bacterioferritin family.</text>
</comment>
<gene>
    <name type="primary">bfr</name>
    <name type="ordered locus">b3336</name>
    <name type="ordered locus">JW3298</name>
</gene>
<evidence type="ECO:0000250" key="1">
    <source>
        <dbReference type="UniProtKB" id="Q9HWF9"/>
    </source>
</evidence>
<evidence type="ECO:0000255" key="2">
    <source>
        <dbReference type="PROSITE-ProRule" id="PRU00085"/>
    </source>
</evidence>
<evidence type="ECO:0000269" key="3">
    <source>
    </source>
</evidence>
<evidence type="ECO:0000269" key="4">
    <source>
    </source>
</evidence>
<evidence type="ECO:0000269" key="5">
    <source>
    </source>
</evidence>
<evidence type="ECO:0000269" key="6">
    <source>
    </source>
</evidence>
<evidence type="ECO:0000269" key="7">
    <source>
    </source>
</evidence>
<evidence type="ECO:0000269" key="8">
    <source>
    </source>
</evidence>
<evidence type="ECO:0000269" key="9">
    <source>
    </source>
</evidence>
<evidence type="ECO:0000269" key="10">
    <source>
    </source>
</evidence>
<evidence type="ECO:0000269" key="11">
    <source>
    </source>
</evidence>
<evidence type="ECO:0000269" key="12">
    <source>
    </source>
</evidence>
<evidence type="ECO:0000269" key="13">
    <source>
    </source>
</evidence>
<evidence type="ECO:0000305" key="14"/>
<evidence type="ECO:0007829" key="15">
    <source>
        <dbReference type="PDB" id="4CVR"/>
    </source>
</evidence>
<organism>
    <name type="scientific">Escherichia coli (strain K12)</name>
    <dbReference type="NCBI Taxonomy" id="83333"/>
    <lineage>
        <taxon>Bacteria</taxon>
        <taxon>Pseudomonadati</taxon>
        <taxon>Pseudomonadota</taxon>
        <taxon>Gammaproteobacteria</taxon>
        <taxon>Enterobacterales</taxon>
        <taxon>Enterobacteriaceae</taxon>
        <taxon>Escherichia</taxon>
    </lineage>
</organism>